<protein>
    <recommendedName>
        <fullName evidence="1">NADH-quinone oxidoreductase subunit C/D</fullName>
        <ecNumber evidence="1">7.1.1.-</ecNumber>
    </recommendedName>
    <alternativeName>
        <fullName evidence="1">NADH dehydrogenase I subunit C/D</fullName>
    </alternativeName>
    <alternativeName>
        <fullName evidence="1">NDH-1 subunit C/D</fullName>
    </alternativeName>
</protein>
<comment type="function">
    <text evidence="1">NDH-1 shuttles electrons from NADH, via FMN and iron-sulfur (Fe-S) centers, to quinones in the respiratory chain. The immediate electron acceptor for the enzyme in this species is believed to be ubiquinone. Couples the redox reaction to proton translocation (for every two electrons transferred, four hydrogen ions are translocated across the cytoplasmic membrane), and thus conserves the redox energy in a proton gradient.</text>
</comment>
<comment type="catalytic activity">
    <reaction evidence="1">
        <text>a quinone + NADH + 5 H(+)(in) = a quinol + NAD(+) + 4 H(+)(out)</text>
        <dbReference type="Rhea" id="RHEA:57888"/>
        <dbReference type="ChEBI" id="CHEBI:15378"/>
        <dbReference type="ChEBI" id="CHEBI:24646"/>
        <dbReference type="ChEBI" id="CHEBI:57540"/>
        <dbReference type="ChEBI" id="CHEBI:57945"/>
        <dbReference type="ChEBI" id="CHEBI:132124"/>
    </reaction>
</comment>
<comment type="subunit">
    <text evidence="1">NDH-1 is composed of 13 different subunits. Subunits NuoB, CD, E, F, and G constitute the peripheral sector of the complex.</text>
</comment>
<comment type="subcellular location">
    <subcellularLocation>
        <location evidence="1">Cell inner membrane</location>
        <topology evidence="1">Peripheral membrane protein</topology>
        <orientation evidence="1">Cytoplasmic side</orientation>
    </subcellularLocation>
</comment>
<comment type="similarity">
    <text evidence="1">In the N-terminal section; belongs to the complex I 30 kDa subunit family.</text>
</comment>
<comment type="similarity">
    <text evidence="1">In the C-terminal section; belongs to the complex I 49 kDa subunit family.</text>
</comment>
<reference key="1">
    <citation type="submission" date="2007-02" db="EMBL/GenBank/DDBJ databases">
        <title>Complete sequence of chromosome 1 of Rhodobacter sphaeroides ATCC 17029.</title>
        <authorList>
            <person name="Copeland A."/>
            <person name="Lucas S."/>
            <person name="Lapidus A."/>
            <person name="Barry K."/>
            <person name="Detter J.C."/>
            <person name="Glavina del Rio T."/>
            <person name="Hammon N."/>
            <person name="Israni S."/>
            <person name="Dalin E."/>
            <person name="Tice H."/>
            <person name="Pitluck S."/>
            <person name="Kiss H."/>
            <person name="Brettin T."/>
            <person name="Bruce D."/>
            <person name="Han C."/>
            <person name="Tapia R."/>
            <person name="Gilna P."/>
            <person name="Schmutz J."/>
            <person name="Larimer F."/>
            <person name="Land M."/>
            <person name="Hauser L."/>
            <person name="Kyrpides N."/>
            <person name="Mikhailova N."/>
            <person name="Richardson P."/>
            <person name="Mackenzie C."/>
            <person name="Choudhary M."/>
            <person name="Donohue T.J."/>
            <person name="Kaplan S."/>
        </authorList>
    </citation>
    <scope>NUCLEOTIDE SEQUENCE [LARGE SCALE GENOMIC DNA]</scope>
    <source>
        <strain>ATCC 17029 / ATH 2.4.9</strain>
    </source>
</reference>
<evidence type="ECO:0000255" key="1">
    <source>
        <dbReference type="HAMAP-Rule" id="MF_01359"/>
    </source>
</evidence>
<name>NUOCD_CERS1</name>
<keyword id="KW-0997">Cell inner membrane</keyword>
<keyword id="KW-1003">Cell membrane</keyword>
<keyword id="KW-0472">Membrane</keyword>
<keyword id="KW-0511">Multifunctional enzyme</keyword>
<keyword id="KW-0520">NAD</keyword>
<keyword id="KW-0874">Quinone</keyword>
<keyword id="KW-1278">Translocase</keyword>
<keyword id="KW-0813">Transport</keyword>
<keyword id="KW-0830">Ubiquinone</keyword>
<organism>
    <name type="scientific">Cereibacter sphaeroides (strain ATCC 17029 / ATH 2.4.9)</name>
    <name type="common">Rhodobacter sphaeroides</name>
    <dbReference type="NCBI Taxonomy" id="349101"/>
    <lineage>
        <taxon>Bacteria</taxon>
        <taxon>Pseudomonadati</taxon>
        <taxon>Pseudomonadota</taxon>
        <taxon>Alphaproteobacteria</taxon>
        <taxon>Rhodobacterales</taxon>
        <taxon>Paracoccaceae</taxon>
        <taxon>Cereibacter</taxon>
    </lineage>
</organism>
<dbReference type="EC" id="7.1.1.-" evidence="1"/>
<dbReference type="EMBL" id="CP000577">
    <property type="protein sequence ID" value="ABN76848.1"/>
    <property type="molecule type" value="Genomic_DNA"/>
</dbReference>
<dbReference type="RefSeq" id="WP_011841210.1">
    <property type="nucleotide sequence ID" value="NC_009049.1"/>
</dbReference>
<dbReference type="SMR" id="A3PKI2"/>
<dbReference type="KEGG" id="rsh:Rsph17029_1738"/>
<dbReference type="HOGENOM" id="CLU_015134_3_2_5"/>
<dbReference type="GO" id="GO:0030964">
    <property type="term" value="C:NADH dehydrogenase complex"/>
    <property type="evidence" value="ECO:0007669"/>
    <property type="project" value="InterPro"/>
</dbReference>
<dbReference type="GO" id="GO:0005886">
    <property type="term" value="C:plasma membrane"/>
    <property type="evidence" value="ECO:0007669"/>
    <property type="project" value="UniProtKB-SubCell"/>
</dbReference>
<dbReference type="GO" id="GO:0051287">
    <property type="term" value="F:NAD binding"/>
    <property type="evidence" value="ECO:0007669"/>
    <property type="project" value="InterPro"/>
</dbReference>
<dbReference type="GO" id="GO:0008137">
    <property type="term" value="F:NADH dehydrogenase (ubiquinone) activity"/>
    <property type="evidence" value="ECO:0007669"/>
    <property type="project" value="InterPro"/>
</dbReference>
<dbReference type="GO" id="GO:0050136">
    <property type="term" value="F:NADH:ubiquinone reductase (non-electrogenic) activity"/>
    <property type="evidence" value="ECO:0007669"/>
    <property type="project" value="UniProtKB-UniRule"/>
</dbReference>
<dbReference type="GO" id="GO:0048038">
    <property type="term" value="F:quinone binding"/>
    <property type="evidence" value="ECO:0007669"/>
    <property type="project" value="UniProtKB-KW"/>
</dbReference>
<dbReference type="Gene3D" id="1.10.645.10">
    <property type="entry name" value="Cytochrome-c3 Hydrogenase, chain B"/>
    <property type="match status" value="1"/>
</dbReference>
<dbReference type="Gene3D" id="3.30.460.80">
    <property type="entry name" value="NADH:ubiquinone oxidoreductase, 30kDa subunit"/>
    <property type="match status" value="1"/>
</dbReference>
<dbReference type="HAMAP" id="MF_01359">
    <property type="entry name" value="NDH1_NuoCD_1"/>
    <property type="match status" value="1"/>
</dbReference>
<dbReference type="HAMAP" id="MF_01358">
    <property type="entry name" value="NDH1_NuoD"/>
    <property type="match status" value="1"/>
</dbReference>
<dbReference type="InterPro" id="IPR023062">
    <property type="entry name" value="NADH_DH_suCD"/>
</dbReference>
<dbReference type="InterPro" id="IPR001135">
    <property type="entry name" value="NADH_Q_OxRdtase_suD"/>
</dbReference>
<dbReference type="InterPro" id="IPR037232">
    <property type="entry name" value="NADH_quin_OxRdtase_su_C/D-like"/>
</dbReference>
<dbReference type="InterPro" id="IPR001268">
    <property type="entry name" value="NADH_UbQ_OxRdtase_30kDa_su"/>
</dbReference>
<dbReference type="InterPro" id="IPR014029">
    <property type="entry name" value="NADH_UbQ_OxRdtase_49kDa_CS"/>
</dbReference>
<dbReference type="InterPro" id="IPR022885">
    <property type="entry name" value="NDH1_su_D/H"/>
</dbReference>
<dbReference type="InterPro" id="IPR029014">
    <property type="entry name" value="NiFe-Hase_large"/>
</dbReference>
<dbReference type="NCBIfam" id="TIGR01962">
    <property type="entry name" value="NuoD"/>
    <property type="match status" value="1"/>
</dbReference>
<dbReference type="NCBIfam" id="NF004739">
    <property type="entry name" value="PRK06075.1"/>
    <property type="match status" value="1"/>
</dbReference>
<dbReference type="NCBIfam" id="NF008728">
    <property type="entry name" value="PRK11742.1"/>
    <property type="match status" value="1"/>
</dbReference>
<dbReference type="PANTHER" id="PTHR11993:SF45">
    <property type="entry name" value="NADH-QUINONE OXIDOREDUCTASE SUBUNIT C_D"/>
    <property type="match status" value="1"/>
</dbReference>
<dbReference type="PANTHER" id="PTHR11993">
    <property type="entry name" value="NADH-UBIQUINONE OXIDOREDUCTASE 49 KDA SUBUNIT"/>
    <property type="match status" value="1"/>
</dbReference>
<dbReference type="Pfam" id="PF00329">
    <property type="entry name" value="Complex1_30kDa"/>
    <property type="match status" value="1"/>
</dbReference>
<dbReference type="Pfam" id="PF00346">
    <property type="entry name" value="Complex1_49kDa"/>
    <property type="match status" value="1"/>
</dbReference>
<dbReference type="SUPFAM" id="SSF56762">
    <property type="entry name" value="HydB/Nqo4-like"/>
    <property type="match status" value="1"/>
</dbReference>
<dbReference type="SUPFAM" id="SSF143243">
    <property type="entry name" value="Nqo5-like"/>
    <property type="match status" value="1"/>
</dbReference>
<dbReference type="PROSITE" id="PS00535">
    <property type="entry name" value="COMPLEX1_49K"/>
    <property type="match status" value="1"/>
</dbReference>
<proteinExistence type="inferred from homology"/>
<accession>A3PKI2</accession>
<gene>
    <name evidence="1" type="primary">nuoC</name>
    <name evidence="1" type="synonym">nuoCD</name>
    <name evidence="1" type="synonym">nuoD</name>
    <name type="ordered locus">Rsph17029_1738</name>
</gene>
<sequence length="580" mass="65321">MSLDQAIPEALQALRTRFGAAVRAEQATGEAFPVLWLDASVWEAAHRFLREEIAAPFPLLADLWAIDESLRQHRTGQPASRITLCSHLVSLVRNADLRLKLATDGRAPSIAGVYANADWYEREAHDMFGLDFGRETRRILMPPTWEGHPLLKTHYARATEKPPFVLTDRLFEAEERATITDPDLLGLPKLRDGEELMVLNFGPHHPSTHGVFRILLGLDGEEVVWAWPDIGYHHRGAEKMAERQTWHGFIPYCDRIDYLGGVISELPYLLAVERLCGIAVPPRAQMIRVMLCEFYRIMNHLLFYGTMAQDVGAMSPVFYMFTDREKGHEILNAITGARMHPAFFRIGGVAMDLPTGWDAMVRGFLDWMPARLDEYERMVLRSELFRARTVGVGAYDTDMALTWGTTGPGLRATGCDWDLRKLRPYSGYEQFDFEVPLGQRGDIFDRTRVRADEMRESLKIIRQCLGNMPEGPVKADHPLTTPPPRGAMQKDIETLIAHFLQSSWGTVVPAGEATGQIEGHRGLTQYSVVSDGGTQSYRTRIRTPSFAHLQMIPKIVPGMTVADLVAHIASIDFVMSDVDR</sequence>
<feature type="chain" id="PRO_0000358673" description="NADH-quinone oxidoreductase subunit C/D">
    <location>
        <begin position="1"/>
        <end position="580"/>
    </location>
</feature>
<feature type="region of interest" description="NADH dehydrogenase I subunit C" evidence="1">
    <location>
        <begin position="1"/>
        <end position="171"/>
    </location>
</feature>
<feature type="region of interest" description="NADH dehydrogenase I subunit D" evidence="1">
    <location>
        <begin position="195"/>
        <end position="580"/>
    </location>
</feature>